<comment type="function">
    <text evidence="1">Together with its co-chaperonin GroES, plays an essential role in assisting protein folding. The GroEL-GroES system forms a nano-cage that allows encapsulation of the non-native substrate proteins and provides a physical environment optimized to promote and accelerate protein folding.</text>
</comment>
<comment type="catalytic activity">
    <reaction evidence="1">
        <text>ATP + H2O + a folded polypeptide = ADP + phosphate + an unfolded polypeptide.</text>
        <dbReference type="EC" id="5.6.1.7"/>
    </reaction>
</comment>
<comment type="subunit">
    <text evidence="1">Forms a cylinder of 14 subunits composed of two heptameric rings stacked back-to-back. Interacts with the co-chaperonin GroES.</text>
</comment>
<comment type="subcellular location">
    <subcellularLocation>
        <location evidence="1">Cytoplasm</location>
    </subcellularLocation>
</comment>
<comment type="similarity">
    <text evidence="1">Belongs to the chaperonin (HSP60) family.</text>
</comment>
<proteinExistence type="inferred from homology"/>
<name>CH605_SINMW</name>
<accession>A6UM48</accession>
<sequence>MAAKEVKFGRSAREKMLRGVDILADAVKVTLGPKGRNVVIDKSFGAPRITKDGVTVAKEIELEDKFENMGAQMVREVASKTNDIAGDGTTTATVLAQAIVREGAKAVAAGMNPMDLKRGIDLAVAEVVKDLLAKAKTINTSDEVAQVGTISANGEKQIGLDIAEAMQKVGNEGVITVEEAKTAETELEVVDGMQFDRGYLSPYFVTNPEKMVADLEDAYILLHEKKLSNLQAMLPVLEAVVQTGKPLLIIAEDVEGEALATLVVNKLRGGLKIAAVKAPGFGDRRKAMLEDIAILTGGTVISEDLGIKLESVTLDMLGRAKKVSITKENTTIVDGAGQKSDIEGRVAQIKAQIEETTSDYDREKLQERLAKLAGGVAVIRVGGATEVEVKEKKDRIDDALNATRAAVQEGIVPGGGVALLRSSVKITVKGENDDQDAGVNIVRRALQSPARQIVENAGDEASIVVGKILEKDTDDFGYNAQTGEYGDMIAMGIIDPVKVVRTALQDAASVASLLITTEAMIAELPKKDAPAMPGGMGGMGGMDMM</sequence>
<feature type="chain" id="PRO_0000332087" description="Chaperonin GroEL 5">
    <location>
        <begin position="1"/>
        <end position="545"/>
    </location>
</feature>
<feature type="binding site" evidence="1">
    <location>
        <begin position="30"/>
        <end position="33"/>
    </location>
    <ligand>
        <name>ATP</name>
        <dbReference type="ChEBI" id="CHEBI:30616"/>
    </ligand>
</feature>
<feature type="binding site" evidence="1">
    <location>
        <position position="51"/>
    </location>
    <ligand>
        <name>ATP</name>
        <dbReference type="ChEBI" id="CHEBI:30616"/>
    </ligand>
</feature>
<feature type="binding site" evidence="1">
    <location>
        <begin position="87"/>
        <end position="91"/>
    </location>
    <ligand>
        <name>ATP</name>
        <dbReference type="ChEBI" id="CHEBI:30616"/>
    </ligand>
</feature>
<feature type="binding site" evidence="1">
    <location>
        <position position="415"/>
    </location>
    <ligand>
        <name>ATP</name>
        <dbReference type="ChEBI" id="CHEBI:30616"/>
    </ligand>
</feature>
<feature type="binding site" evidence="1">
    <location>
        <position position="495"/>
    </location>
    <ligand>
        <name>ATP</name>
        <dbReference type="ChEBI" id="CHEBI:30616"/>
    </ligand>
</feature>
<gene>
    <name evidence="1" type="primary">groEL5</name>
    <name evidence="1" type="synonym">groL5</name>
    <name type="ordered locus">Smed_6084</name>
</gene>
<geneLocation type="plasmid">
    <name>pSMED02</name>
</geneLocation>
<organism>
    <name type="scientific">Sinorhizobium medicae (strain WSM419)</name>
    <name type="common">Ensifer medicae</name>
    <dbReference type="NCBI Taxonomy" id="366394"/>
    <lineage>
        <taxon>Bacteria</taxon>
        <taxon>Pseudomonadati</taxon>
        <taxon>Pseudomonadota</taxon>
        <taxon>Alphaproteobacteria</taxon>
        <taxon>Hyphomicrobiales</taxon>
        <taxon>Rhizobiaceae</taxon>
        <taxon>Sinorhizobium/Ensifer group</taxon>
        <taxon>Sinorhizobium</taxon>
    </lineage>
</organism>
<dbReference type="EC" id="5.6.1.7" evidence="1"/>
<dbReference type="EMBL" id="CP000740">
    <property type="protein sequence ID" value="ABR64728.1"/>
    <property type="molecule type" value="Genomic_DNA"/>
</dbReference>
<dbReference type="RefSeq" id="YP_001314661.1">
    <property type="nucleotide sequence ID" value="NC_009621.1"/>
</dbReference>
<dbReference type="SMR" id="A6UM48"/>
<dbReference type="KEGG" id="smd:Smed_6084"/>
<dbReference type="PATRIC" id="fig|366394.8.peg.2590"/>
<dbReference type="eggNOG" id="COG0459">
    <property type="taxonomic scope" value="Bacteria"/>
</dbReference>
<dbReference type="HOGENOM" id="CLU_016503_3_0_5"/>
<dbReference type="OrthoDB" id="9766614at2"/>
<dbReference type="Proteomes" id="UP000001108">
    <property type="component" value="Plasmid pSMED02"/>
</dbReference>
<dbReference type="GO" id="GO:0005737">
    <property type="term" value="C:cytoplasm"/>
    <property type="evidence" value="ECO:0007669"/>
    <property type="project" value="UniProtKB-SubCell"/>
</dbReference>
<dbReference type="GO" id="GO:0005524">
    <property type="term" value="F:ATP binding"/>
    <property type="evidence" value="ECO:0007669"/>
    <property type="project" value="UniProtKB-UniRule"/>
</dbReference>
<dbReference type="GO" id="GO:0140662">
    <property type="term" value="F:ATP-dependent protein folding chaperone"/>
    <property type="evidence" value="ECO:0007669"/>
    <property type="project" value="InterPro"/>
</dbReference>
<dbReference type="GO" id="GO:0016853">
    <property type="term" value="F:isomerase activity"/>
    <property type="evidence" value="ECO:0007669"/>
    <property type="project" value="UniProtKB-KW"/>
</dbReference>
<dbReference type="GO" id="GO:0051082">
    <property type="term" value="F:unfolded protein binding"/>
    <property type="evidence" value="ECO:0007669"/>
    <property type="project" value="UniProtKB-UniRule"/>
</dbReference>
<dbReference type="GO" id="GO:0042026">
    <property type="term" value="P:protein refolding"/>
    <property type="evidence" value="ECO:0007669"/>
    <property type="project" value="UniProtKB-UniRule"/>
</dbReference>
<dbReference type="CDD" id="cd03344">
    <property type="entry name" value="GroEL"/>
    <property type="match status" value="1"/>
</dbReference>
<dbReference type="FunFam" id="1.10.560.10:FF:000001">
    <property type="entry name" value="60 kDa chaperonin"/>
    <property type="match status" value="1"/>
</dbReference>
<dbReference type="FunFam" id="3.50.7.10:FF:000001">
    <property type="entry name" value="60 kDa chaperonin"/>
    <property type="match status" value="1"/>
</dbReference>
<dbReference type="Gene3D" id="3.50.7.10">
    <property type="entry name" value="GroEL"/>
    <property type="match status" value="1"/>
</dbReference>
<dbReference type="Gene3D" id="1.10.560.10">
    <property type="entry name" value="GroEL-like equatorial domain"/>
    <property type="match status" value="1"/>
</dbReference>
<dbReference type="Gene3D" id="3.30.260.10">
    <property type="entry name" value="TCP-1-like chaperonin intermediate domain"/>
    <property type="match status" value="1"/>
</dbReference>
<dbReference type="HAMAP" id="MF_00600">
    <property type="entry name" value="CH60"/>
    <property type="match status" value="1"/>
</dbReference>
<dbReference type="InterPro" id="IPR018370">
    <property type="entry name" value="Chaperonin_Cpn60_CS"/>
</dbReference>
<dbReference type="InterPro" id="IPR001844">
    <property type="entry name" value="Cpn60/GroEL"/>
</dbReference>
<dbReference type="InterPro" id="IPR002423">
    <property type="entry name" value="Cpn60/GroEL/TCP-1"/>
</dbReference>
<dbReference type="InterPro" id="IPR027409">
    <property type="entry name" value="GroEL-like_apical_dom_sf"/>
</dbReference>
<dbReference type="InterPro" id="IPR027413">
    <property type="entry name" value="GROEL-like_equatorial_sf"/>
</dbReference>
<dbReference type="InterPro" id="IPR027410">
    <property type="entry name" value="TCP-1-like_intermed_sf"/>
</dbReference>
<dbReference type="NCBIfam" id="TIGR02348">
    <property type="entry name" value="GroEL"/>
    <property type="match status" value="1"/>
</dbReference>
<dbReference type="NCBIfam" id="NF000592">
    <property type="entry name" value="PRK00013.1"/>
    <property type="match status" value="1"/>
</dbReference>
<dbReference type="NCBIfam" id="NF009487">
    <property type="entry name" value="PRK12849.1"/>
    <property type="match status" value="1"/>
</dbReference>
<dbReference type="NCBIfam" id="NF009488">
    <property type="entry name" value="PRK12850.1"/>
    <property type="match status" value="1"/>
</dbReference>
<dbReference type="NCBIfam" id="NF009489">
    <property type="entry name" value="PRK12851.1"/>
    <property type="match status" value="1"/>
</dbReference>
<dbReference type="PANTHER" id="PTHR45633">
    <property type="entry name" value="60 KDA HEAT SHOCK PROTEIN, MITOCHONDRIAL"/>
    <property type="match status" value="1"/>
</dbReference>
<dbReference type="Pfam" id="PF00118">
    <property type="entry name" value="Cpn60_TCP1"/>
    <property type="match status" value="1"/>
</dbReference>
<dbReference type="PRINTS" id="PR00298">
    <property type="entry name" value="CHAPERONIN60"/>
</dbReference>
<dbReference type="SUPFAM" id="SSF52029">
    <property type="entry name" value="GroEL apical domain-like"/>
    <property type="match status" value="1"/>
</dbReference>
<dbReference type="SUPFAM" id="SSF48592">
    <property type="entry name" value="GroEL equatorial domain-like"/>
    <property type="match status" value="1"/>
</dbReference>
<dbReference type="SUPFAM" id="SSF54849">
    <property type="entry name" value="GroEL-intermediate domain like"/>
    <property type="match status" value="1"/>
</dbReference>
<dbReference type="PROSITE" id="PS00296">
    <property type="entry name" value="CHAPERONINS_CPN60"/>
    <property type="match status" value="1"/>
</dbReference>
<reference key="1">
    <citation type="submission" date="2007-06" db="EMBL/GenBank/DDBJ databases">
        <title>Complete sequence of Sinorhizobium medicae WSM419 plasmid pSMED02.</title>
        <authorList>
            <consortium name="US DOE Joint Genome Institute"/>
            <person name="Copeland A."/>
            <person name="Lucas S."/>
            <person name="Lapidus A."/>
            <person name="Barry K."/>
            <person name="Glavina del Rio T."/>
            <person name="Dalin E."/>
            <person name="Tice H."/>
            <person name="Pitluck S."/>
            <person name="Chain P."/>
            <person name="Malfatti S."/>
            <person name="Shin M."/>
            <person name="Vergez L."/>
            <person name="Schmutz J."/>
            <person name="Larimer F."/>
            <person name="Land M."/>
            <person name="Hauser L."/>
            <person name="Kyrpides N."/>
            <person name="Mikhailova N."/>
            <person name="Reeve W.G."/>
            <person name="Richardson P."/>
        </authorList>
    </citation>
    <scope>NUCLEOTIDE SEQUENCE [LARGE SCALE GENOMIC DNA]</scope>
    <source>
        <strain>WSM419</strain>
    </source>
</reference>
<keyword id="KW-0067">ATP-binding</keyword>
<keyword id="KW-0143">Chaperone</keyword>
<keyword id="KW-0963">Cytoplasm</keyword>
<keyword id="KW-0413">Isomerase</keyword>
<keyword id="KW-0547">Nucleotide-binding</keyword>
<keyword id="KW-0614">Plasmid</keyword>
<protein>
    <recommendedName>
        <fullName evidence="1">Chaperonin GroEL 5</fullName>
        <ecNumber evidence="1">5.6.1.7</ecNumber>
    </recommendedName>
    <alternativeName>
        <fullName evidence="1">60 kDa chaperonin 5</fullName>
    </alternativeName>
    <alternativeName>
        <fullName evidence="1">Chaperonin-60 5</fullName>
        <shortName evidence="1">Cpn60 5</shortName>
    </alternativeName>
</protein>
<evidence type="ECO:0000255" key="1">
    <source>
        <dbReference type="HAMAP-Rule" id="MF_00600"/>
    </source>
</evidence>